<reference key="1">
    <citation type="journal article" date="2008" name="BMC Genomics">
        <title>Genomics of an extreme psychrophile, Psychromonas ingrahamii.</title>
        <authorList>
            <person name="Riley M."/>
            <person name="Staley J.T."/>
            <person name="Danchin A."/>
            <person name="Wang T.Z."/>
            <person name="Brettin T.S."/>
            <person name="Hauser L.J."/>
            <person name="Land M.L."/>
            <person name="Thompson L.S."/>
        </authorList>
    </citation>
    <scope>NUCLEOTIDE SEQUENCE [LARGE SCALE GENOMIC DNA]</scope>
    <source>
        <strain>DSM 17664 / CCUG 51855 / 37</strain>
    </source>
</reference>
<comment type="function">
    <text evidence="1">Represses a number of genes involved in the response to DNA damage (SOS response), including recA and lexA. In the presence of single-stranded DNA, RecA interacts with LexA causing an autocatalytic cleavage which disrupts the DNA-binding part of LexA, leading to derepression of the SOS regulon and eventually DNA repair.</text>
</comment>
<comment type="catalytic activity">
    <reaction evidence="1">
        <text>Hydrolysis of Ala-|-Gly bond in repressor LexA.</text>
        <dbReference type="EC" id="3.4.21.88"/>
    </reaction>
</comment>
<comment type="subunit">
    <text evidence="1">Homodimer.</text>
</comment>
<comment type="similarity">
    <text evidence="1">Belongs to the peptidase S24 family.</text>
</comment>
<organism>
    <name type="scientific">Psychromonas ingrahamii (strain DSM 17664 / CCUG 51855 / 37)</name>
    <dbReference type="NCBI Taxonomy" id="357804"/>
    <lineage>
        <taxon>Bacteria</taxon>
        <taxon>Pseudomonadati</taxon>
        <taxon>Pseudomonadota</taxon>
        <taxon>Gammaproteobacteria</taxon>
        <taxon>Alteromonadales</taxon>
        <taxon>Psychromonadaceae</taxon>
        <taxon>Psychromonas</taxon>
    </lineage>
</organism>
<dbReference type="EC" id="3.4.21.88" evidence="1"/>
<dbReference type="EMBL" id="CP000510">
    <property type="protein sequence ID" value="ABM01982.1"/>
    <property type="molecule type" value="Genomic_DNA"/>
</dbReference>
<dbReference type="RefSeq" id="WP_011768541.1">
    <property type="nucleotide sequence ID" value="NC_008709.1"/>
</dbReference>
<dbReference type="SMR" id="A1SR67"/>
<dbReference type="STRING" id="357804.Ping_0108"/>
<dbReference type="MEROPS" id="S24.001"/>
<dbReference type="KEGG" id="pin:Ping_0108"/>
<dbReference type="eggNOG" id="COG1974">
    <property type="taxonomic scope" value="Bacteria"/>
</dbReference>
<dbReference type="HOGENOM" id="CLU_066192_45_3_6"/>
<dbReference type="OrthoDB" id="9802364at2"/>
<dbReference type="Proteomes" id="UP000000639">
    <property type="component" value="Chromosome"/>
</dbReference>
<dbReference type="GO" id="GO:0003677">
    <property type="term" value="F:DNA binding"/>
    <property type="evidence" value="ECO:0007669"/>
    <property type="project" value="UniProtKB-UniRule"/>
</dbReference>
<dbReference type="GO" id="GO:0004252">
    <property type="term" value="F:serine-type endopeptidase activity"/>
    <property type="evidence" value="ECO:0007669"/>
    <property type="project" value="UniProtKB-UniRule"/>
</dbReference>
<dbReference type="GO" id="GO:0006281">
    <property type="term" value="P:DNA repair"/>
    <property type="evidence" value="ECO:0007669"/>
    <property type="project" value="UniProtKB-UniRule"/>
</dbReference>
<dbReference type="GO" id="GO:0006260">
    <property type="term" value="P:DNA replication"/>
    <property type="evidence" value="ECO:0007669"/>
    <property type="project" value="UniProtKB-UniRule"/>
</dbReference>
<dbReference type="GO" id="GO:0045892">
    <property type="term" value="P:negative regulation of DNA-templated transcription"/>
    <property type="evidence" value="ECO:0007669"/>
    <property type="project" value="UniProtKB-UniRule"/>
</dbReference>
<dbReference type="GO" id="GO:0006508">
    <property type="term" value="P:proteolysis"/>
    <property type="evidence" value="ECO:0007669"/>
    <property type="project" value="InterPro"/>
</dbReference>
<dbReference type="GO" id="GO:0009432">
    <property type="term" value="P:SOS response"/>
    <property type="evidence" value="ECO:0007669"/>
    <property type="project" value="UniProtKB-UniRule"/>
</dbReference>
<dbReference type="CDD" id="cd06529">
    <property type="entry name" value="S24_LexA-like"/>
    <property type="match status" value="1"/>
</dbReference>
<dbReference type="FunFam" id="1.10.10.10:FF:000009">
    <property type="entry name" value="LexA repressor"/>
    <property type="match status" value="1"/>
</dbReference>
<dbReference type="FunFam" id="2.10.109.10:FF:000001">
    <property type="entry name" value="LexA repressor"/>
    <property type="match status" value="1"/>
</dbReference>
<dbReference type="Gene3D" id="2.10.109.10">
    <property type="entry name" value="Umud Fragment, subunit A"/>
    <property type="match status" value="1"/>
</dbReference>
<dbReference type="Gene3D" id="1.10.10.10">
    <property type="entry name" value="Winged helix-like DNA-binding domain superfamily/Winged helix DNA-binding domain"/>
    <property type="match status" value="1"/>
</dbReference>
<dbReference type="HAMAP" id="MF_00015">
    <property type="entry name" value="LexA"/>
    <property type="match status" value="1"/>
</dbReference>
<dbReference type="InterPro" id="IPR006200">
    <property type="entry name" value="LexA"/>
</dbReference>
<dbReference type="InterPro" id="IPR039418">
    <property type="entry name" value="LexA-like"/>
</dbReference>
<dbReference type="InterPro" id="IPR036286">
    <property type="entry name" value="LexA/Signal_pep-like_sf"/>
</dbReference>
<dbReference type="InterPro" id="IPR006199">
    <property type="entry name" value="LexA_DNA-bd_dom"/>
</dbReference>
<dbReference type="InterPro" id="IPR050077">
    <property type="entry name" value="LexA_repressor"/>
</dbReference>
<dbReference type="InterPro" id="IPR006197">
    <property type="entry name" value="Peptidase_S24_LexA"/>
</dbReference>
<dbReference type="InterPro" id="IPR015927">
    <property type="entry name" value="Peptidase_S24_S26A/B/C"/>
</dbReference>
<dbReference type="InterPro" id="IPR036388">
    <property type="entry name" value="WH-like_DNA-bd_sf"/>
</dbReference>
<dbReference type="InterPro" id="IPR036390">
    <property type="entry name" value="WH_DNA-bd_sf"/>
</dbReference>
<dbReference type="NCBIfam" id="TIGR00498">
    <property type="entry name" value="lexA"/>
    <property type="match status" value="1"/>
</dbReference>
<dbReference type="PANTHER" id="PTHR33516">
    <property type="entry name" value="LEXA REPRESSOR"/>
    <property type="match status" value="1"/>
</dbReference>
<dbReference type="PANTHER" id="PTHR33516:SF2">
    <property type="entry name" value="LEXA REPRESSOR-RELATED"/>
    <property type="match status" value="1"/>
</dbReference>
<dbReference type="Pfam" id="PF01726">
    <property type="entry name" value="LexA_DNA_bind"/>
    <property type="match status" value="1"/>
</dbReference>
<dbReference type="Pfam" id="PF00717">
    <property type="entry name" value="Peptidase_S24"/>
    <property type="match status" value="1"/>
</dbReference>
<dbReference type="PRINTS" id="PR00726">
    <property type="entry name" value="LEXASERPTASE"/>
</dbReference>
<dbReference type="SUPFAM" id="SSF51306">
    <property type="entry name" value="LexA/Signal peptidase"/>
    <property type="match status" value="1"/>
</dbReference>
<dbReference type="SUPFAM" id="SSF46785">
    <property type="entry name" value="Winged helix' DNA-binding domain"/>
    <property type="match status" value="1"/>
</dbReference>
<keyword id="KW-0068">Autocatalytic cleavage</keyword>
<keyword id="KW-0227">DNA damage</keyword>
<keyword id="KW-0234">DNA repair</keyword>
<keyword id="KW-0235">DNA replication</keyword>
<keyword id="KW-0238">DNA-binding</keyword>
<keyword id="KW-0378">Hydrolase</keyword>
<keyword id="KW-1185">Reference proteome</keyword>
<keyword id="KW-0678">Repressor</keyword>
<keyword id="KW-0742">SOS response</keyword>
<keyword id="KW-0804">Transcription</keyword>
<keyword id="KW-0805">Transcription regulation</keyword>
<name>LEXA_PSYIN</name>
<evidence type="ECO:0000255" key="1">
    <source>
        <dbReference type="HAMAP-Rule" id="MF_00015"/>
    </source>
</evidence>
<feature type="chain" id="PRO_1000001320" description="LexA repressor">
    <location>
        <begin position="1"/>
        <end position="209"/>
    </location>
</feature>
<feature type="DNA-binding region" description="H-T-H motif" evidence="1">
    <location>
        <begin position="28"/>
        <end position="48"/>
    </location>
</feature>
<feature type="active site" description="For autocatalytic cleavage activity" evidence="1">
    <location>
        <position position="126"/>
    </location>
</feature>
<feature type="active site" description="For autocatalytic cleavage activity" evidence="1">
    <location>
        <position position="163"/>
    </location>
</feature>
<feature type="site" description="Cleavage; by autolysis" evidence="1">
    <location>
        <begin position="91"/>
        <end position="92"/>
    </location>
</feature>
<sequence length="209" mass="23241">MKELTKRQNEVLDVIKDQILKTGMPPTRVELAKILGFRSANAAEEHLKALARKGAIEILAGTSRGIRLLGEHQHNEKAHQDGLPLIGQVAAGEPILAQQHIETYYDVDPALFHPSADFLLRVQGESMKDIGIMDGDLLAVHKTQDIKNGQVVIARVEDDVTVKRFYREGRQVILKAENNDFGPIKIDLAYQSFDIEGIAVGVIRTADWM</sequence>
<gene>
    <name evidence="1" type="primary">lexA</name>
    <name type="ordered locus">Ping_0108</name>
</gene>
<protein>
    <recommendedName>
        <fullName evidence="1">LexA repressor</fullName>
        <ecNumber evidence="1">3.4.21.88</ecNumber>
    </recommendedName>
</protein>
<accession>A1SR67</accession>
<proteinExistence type="inferred from homology"/>